<comment type="function">
    <text evidence="1 2">Catalyzes the non-oxidative deamination of L-phenylalanine to form trans-cinnamic acid and a free ammonium ion (By similarity). Facilitates the commitment step in phenylpropanoid pathways that produce secondary metabolites such as lignins, coumarins and flavonoids (By similarity).</text>
</comment>
<comment type="catalytic activity">
    <reaction evidence="1">
        <text>L-phenylalanine = (E)-cinnamate + NH4(+)</text>
        <dbReference type="Rhea" id="RHEA:21384"/>
        <dbReference type="ChEBI" id="CHEBI:15669"/>
        <dbReference type="ChEBI" id="CHEBI:28938"/>
        <dbReference type="ChEBI" id="CHEBI:58095"/>
        <dbReference type="EC" id="4.3.1.24"/>
    </reaction>
</comment>
<comment type="pathway">
    <text evidence="5">Phenylpropanoid metabolism; trans-cinnamate biosynthesis; trans-cinnamate from L-phenylalanine: step 1/1.</text>
</comment>
<comment type="subunit">
    <text evidence="2">Homotetramer.</text>
</comment>
<comment type="subcellular location">
    <subcellularLocation>
        <location evidence="5">Cytoplasm</location>
    </subcellularLocation>
</comment>
<comment type="PTM">
    <text evidence="3">Contains an active site 4-methylidene-imidazol-5-one (MIO), which is formed autocatalytically by cyclization and dehydration of residues Ala-Ser-Gly.</text>
</comment>
<comment type="similarity">
    <text evidence="5">Belongs to the PAL/histidase family.</text>
</comment>
<proteinExistence type="evidence at transcript level"/>
<name>PALY_AGABI</name>
<dbReference type="EC" id="4.3.1.24" evidence="1"/>
<dbReference type="EMBL" id="Z82018">
    <property type="protein sequence ID" value="CAB04783.1"/>
    <property type="molecule type" value="mRNA"/>
</dbReference>
<dbReference type="SMR" id="Q92195"/>
<dbReference type="UniPathway" id="UPA00713">
    <property type="reaction ID" value="UER00725"/>
</dbReference>
<dbReference type="GO" id="GO:0005737">
    <property type="term" value="C:cytoplasm"/>
    <property type="evidence" value="ECO:0007669"/>
    <property type="project" value="UniProtKB-SubCell"/>
</dbReference>
<dbReference type="GO" id="GO:0045548">
    <property type="term" value="F:phenylalanine ammonia-lyase activity"/>
    <property type="evidence" value="ECO:0000250"/>
    <property type="project" value="UniProtKB"/>
</dbReference>
<dbReference type="GO" id="GO:0009800">
    <property type="term" value="P:cinnamic acid biosynthetic process"/>
    <property type="evidence" value="ECO:0007669"/>
    <property type="project" value="UniProtKB-UniPathway"/>
</dbReference>
<dbReference type="GO" id="GO:0006559">
    <property type="term" value="P:L-phenylalanine catabolic process"/>
    <property type="evidence" value="ECO:0007669"/>
    <property type="project" value="UniProtKB-KW"/>
</dbReference>
<dbReference type="Gene3D" id="1.20.200.10">
    <property type="entry name" value="Fumarase/aspartase (Central domain)"/>
    <property type="match status" value="1"/>
</dbReference>
<dbReference type="InterPro" id="IPR001106">
    <property type="entry name" value="Aromatic_Lyase"/>
</dbReference>
<dbReference type="InterPro" id="IPR008948">
    <property type="entry name" value="L-Aspartase-like"/>
</dbReference>
<dbReference type="PANTHER" id="PTHR10362">
    <property type="entry name" value="HISTIDINE AMMONIA-LYASE"/>
    <property type="match status" value="1"/>
</dbReference>
<dbReference type="Pfam" id="PF00221">
    <property type="entry name" value="Lyase_aromatic"/>
    <property type="match status" value="1"/>
</dbReference>
<dbReference type="SUPFAM" id="SSF48557">
    <property type="entry name" value="L-aspartase-like"/>
    <property type="match status" value="1"/>
</dbReference>
<sequence length="142" mass="15200">ETGRIHHGGNFQAMAVTNAMEKTRLALHHIGKIIFAQSTELINPATNRGLPPSLAASDPSLNYHVKGVDIATAAYAAELGYLASPVSTHIQSAEMHNQAVNSMALVSARATINSIDVLSMLVATYLYNLCQALDLRALQAEF</sequence>
<feature type="chain" id="PRO_0000215429" description="Phenylalanine ammonia-lyase">
    <location>
        <begin position="1" status="less than"/>
        <end position="142" status="greater than"/>
    </location>
</feature>
<feature type="binding site" evidence="2">
    <location>
        <position position="66"/>
    </location>
    <ligand>
        <name>(E)-cinnamate</name>
        <dbReference type="ChEBI" id="CHEBI:15669"/>
    </ligand>
</feature>
<feature type="binding site" evidence="2">
    <location>
        <position position="94"/>
    </location>
    <ligand>
        <name>(E)-cinnamate</name>
        <dbReference type="ChEBI" id="CHEBI:15669"/>
    </ligand>
</feature>
<feature type="binding site" evidence="3">
    <location>
        <position position="97"/>
    </location>
    <ligand>
        <name>(E)-cinnamate</name>
        <dbReference type="ChEBI" id="CHEBI:15669"/>
    </ligand>
</feature>
<feature type="non-terminal residue">
    <location>
        <position position="1"/>
    </location>
</feature>
<feature type="non-terminal residue">
    <location>
        <position position="142"/>
    </location>
</feature>
<accession>Q92195</accession>
<evidence type="ECO:0000250" key="1">
    <source>
        <dbReference type="UniProtKB" id="A0A4Y6HUI7"/>
    </source>
</evidence>
<evidence type="ECO:0000250" key="2">
    <source>
        <dbReference type="UniProtKB" id="P11544"/>
    </source>
</evidence>
<evidence type="ECO:0000250" key="3">
    <source>
        <dbReference type="UniProtKB" id="Q68G84"/>
    </source>
</evidence>
<evidence type="ECO:0000303" key="4">
    <source ref="1"/>
</evidence>
<evidence type="ECO:0000305" key="5"/>
<gene>
    <name type="primary">palA</name>
</gene>
<keyword id="KW-0963">Cytoplasm</keyword>
<keyword id="KW-0456">Lyase</keyword>
<keyword id="KW-0585">Phenylalanine catabolism</keyword>
<keyword id="KW-0587">Phenylpropanoid metabolism</keyword>
<organism>
    <name type="scientific">Agaricus bisporus</name>
    <name type="common">White button mushroom</name>
    <dbReference type="NCBI Taxonomy" id="5341"/>
    <lineage>
        <taxon>Eukaryota</taxon>
        <taxon>Fungi</taxon>
        <taxon>Dikarya</taxon>
        <taxon>Basidiomycota</taxon>
        <taxon>Agaricomycotina</taxon>
        <taxon>Agaricomycetes</taxon>
        <taxon>Agaricomycetidae</taxon>
        <taxon>Agaricales</taxon>
        <taxon>Agaricineae</taxon>
        <taxon>Agaricaceae</taxon>
        <taxon>Agaricus</taxon>
    </lineage>
</organism>
<reference key="1">
    <citation type="submission" date="1996-11" db="EMBL/GenBank/DDBJ databases">
        <title>cDNA fragment of the gene encoding phenylalanine ammonia-lyase from Agaricus bisporus.</title>
        <authorList>
            <person name="Basten D.E.J.W."/>
            <person name="de Groot P.W.J."/>
            <person name="Schaap P.J."/>
            <person name="Visser J."/>
        </authorList>
    </citation>
    <scope>NUCLEOTIDE SEQUENCE [MRNA]</scope>
    <source>
        <strain>Horst U1</strain>
    </source>
</reference>
<protein>
    <recommendedName>
        <fullName evidence="4">Phenylalanine ammonia-lyase</fullName>
        <ecNumber evidence="1">4.3.1.24</ecNumber>
    </recommendedName>
</protein>